<comment type="function">
    <text evidence="1">Forms part of the ribosomal stalk which helps the ribosome interact with GTP-bound translation factors.</text>
</comment>
<comment type="subunit">
    <text evidence="1">Part of the ribosomal stalk of the 50S ribosomal subunit. Interacts with L10 and the large rRNA to form the base of the stalk. L10 forms an elongated spine to which L12 dimers bind in a sequential fashion forming a multimeric L10(L12)X complex.</text>
</comment>
<comment type="PTM">
    <text evidence="1">One or more lysine residues are methylated.</text>
</comment>
<comment type="similarity">
    <text evidence="1">Belongs to the universal ribosomal protein uL11 family.</text>
</comment>
<sequence>MAKKITAYIKLQVKAAQANPSPPVGPALGQHGVNIMEFCKAFNARTQGLEPGLPTPVIITVYSDRSFTFETKSTPASVLLKKAAGLTSGSARPNTVKVGTVTRAQLEEIAKTKNADLTAADMDAAVRTIAGSARSMGLNVEGV</sequence>
<gene>
    <name evidence="1" type="primary">rplK</name>
    <name type="ordered locus">PFLU_5538</name>
</gene>
<name>RL11_PSEFS</name>
<keyword id="KW-0488">Methylation</keyword>
<keyword id="KW-0687">Ribonucleoprotein</keyword>
<keyword id="KW-0689">Ribosomal protein</keyword>
<keyword id="KW-0694">RNA-binding</keyword>
<keyword id="KW-0699">rRNA-binding</keyword>
<dbReference type="EMBL" id="AM181176">
    <property type="protein sequence ID" value="CAY52784.1"/>
    <property type="molecule type" value="Genomic_DNA"/>
</dbReference>
<dbReference type="RefSeq" id="WP_003176435.1">
    <property type="nucleotide sequence ID" value="NC_012660.1"/>
</dbReference>
<dbReference type="SMR" id="C3K2Y7"/>
<dbReference type="STRING" id="294.SRM1_05190"/>
<dbReference type="GeneID" id="98113718"/>
<dbReference type="eggNOG" id="COG0080">
    <property type="taxonomic scope" value="Bacteria"/>
</dbReference>
<dbReference type="HOGENOM" id="CLU_074237_2_0_6"/>
<dbReference type="OrthoDB" id="9802408at2"/>
<dbReference type="GO" id="GO:0022625">
    <property type="term" value="C:cytosolic large ribosomal subunit"/>
    <property type="evidence" value="ECO:0007669"/>
    <property type="project" value="TreeGrafter"/>
</dbReference>
<dbReference type="GO" id="GO:0070180">
    <property type="term" value="F:large ribosomal subunit rRNA binding"/>
    <property type="evidence" value="ECO:0007669"/>
    <property type="project" value="UniProtKB-UniRule"/>
</dbReference>
<dbReference type="GO" id="GO:0003735">
    <property type="term" value="F:structural constituent of ribosome"/>
    <property type="evidence" value="ECO:0007669"/>
    <property type="project" value="InterPro"/>
</dbReference>
<dbReference type="GO" id="GO:0006412">
    <property type="term" value="P:translation"/>
    <property type="evidence" value="ECO:0007669"/>
    <property type="project" value="UniProtKB-UniRule"/>
</dbReference>
<dbReference type="CDD" id="cd00349">
    <property type="entry name" value="Ribosomal_L11"/>
    <property type="match status" value="1"/>
</dbReference>
<dbReference type="FunFam" id="1.10.10.250:FF:000001">
    <property type="entry name" value="50S ribosomal protein L11"/>
    <property type="match status" value="1"/>
</dbReference>
<dbReference type="FunFam" id="3.30.1550.10:FF:000001">
    <property type="entry name" value="50S ribosomal protein L11"/>
    <property type="match status" value="1"/>
</dbReference>
<dbReference type="Gene3D" id="1.10.10.250">
    <property type="entry name" value="Ribosomal protein L11, C-terminal domain"/>
    <property type="match status" value="1"/>
</dbReference>
<dbReference type="Gene3D" id="3.30.1550.10">
    <property type="entry name" value="Ribosomal protein L11/L12, N-terminal domain"/>
    <property type="match status" value="1"/>
</dbReference>
<dbReference type="HAMAP" id="MF_00736">
    <property type="entry name" value="Ribosomal_uL11"/>
    <property type="match status" value="1"/>
</dbReference>
<dbReference type="InterPro" id="IPR000911">
    <property type="entry name" value="Ribosomal_uL11"/>
</dbReference>
<dbReference type="InterPro" id="IPR006519">
    <property type="entry name" value="Ribosomal_uL11_bac-typ"/>
</dbReference>
<dbReference type="InterPro" id="IPR020783">
    <property type="entry name" value="Ribosomal_uL11_C"/>
</dbReference>
<dbReference type="InterPro" id="IPR036769">
    <property type="entry name" value="Ribosomal_uL11_C_sf"/>
</dbReference>
<dbReference type="InterPro" id="IPR020785">
    <property type="entry name" value="Ribosomal_uL11_CS"/>
</dbReference>
<dbReference type="InterPro" id="IPR020784">
    <property type="entry name" value="Ribosomal_uL11_N"/>
</dbReference>
<dbReference type="InterPro" id="IPR036796">
    <property type="entry name" value="Ribosomal_uL11_N_sf"/>
</dbReference>
<dbReference type="NCBIfam" id="TIGR01632">
    <property type="entry name" value="L11_bact"/>
    <property type="match status" value="1"/>
</dbReference>
<dbReference type="PANTHER" id="PTHR11661">
    <property type="entry name" value="60S RIBOSOMAL PROTEIN L12"/>
    <property type="match status" value="1"/>
</dbReference>
<dbReference type="PANTHER" id="PTHR11661:SF1">
    <property type="entry name" value="LARGE RIBOSOMAL SUBUNIT PROTEIN UL11M"/>
    <property type="match status" value="1"/>
</dbReference>
<dbReference type="Pfam" id="PF00298">
    <property type="entry name" value="Ribosomal_L11"/>
    <property type="match status" value="1"/>
</dbReference>
<dbReference type="Pfam" id="PF03946">
    <property type="entry name" value="Ribosomal_L11_N"/>
    <property type="match status" value="1"/>
</dbReference>
<dbReference type="SMART" id="SM00649">
    <property type="entry name" value="RL11"/>
    <property type="match status" value="1"/>
</dbReference>
<dbReference type="SUPFAM" id="SSF54747">
    <property type="entry name" value="Ribosomal L11/L12e N-terminal domain"/>
    <property type="match status" value="1"/>
</dbReference>
<dbReference type="SUPFAM" id="SSF46906">
    <property type="entry name" value="Ribosomal protein L11, C-terminal domain"/>
    <property type="match status" value="1"/>
</dbReference>
<dbReference type="PROSITE" id="PS00359">
    <property type="entry name" value="RIBOSOMAL_L11"/>
    <property type="match status" value="1"/>
</dbReference>
<evidence type="ECO:0000255" key="1">
    <source>
        <dbReference type="HAMAP-Rule" id="MF_00736"/>
    </source>
</evidence>
<evidence type="ECO:0000305" key="2"/>
<organism>
    <name type="scientific">Pseudomonas fluorescens (strain SBW25)</name>
    <dbReference type="NCBI Taxonomy" id="216595"/>
    <lineage>
        <taxon>Bacteria</taxon>
        <taxon>Pseudomonadati</taxon>
        <taxon>Pseudomonadota</taxon>
        <taxon>Gammaproteobacteria</taxon>
        <taxon>Pseudomonadales</taxon>
        <taxon>Pseudomonadaceae</taxon>
        <taxon>Pseudomonas</taxon>
    </lineage>
</organism>
<feature type="chain" id="PRO_1000212783" description="Large ribosomal subunit protein uL11">
    <location>
        <begin position="1"/>
        <end position="143"/>
    </location>
</feature>
<protein>
    <recommendedName>
        <fullName evidence="1">Large ribosomal subunit protein uL11</fullName>
    </recommendedName>
    <alternativeName>
        <fullName evidence="2">50S ribosomal protein L11</fullName>
    </alternativeName>
</protein>
<accession>C3K2Y7</accession>
<proteinExistence type="inferred from homology"/>
<reference key="1">
    <citation type="journal article" date="2009" name="Genome Biol.">
        <title>Genomic and genetic analyses of diversity and plant interactions of Pseudomonas fluorescens.</title>
        <authorList>
            <person name="Silby M.W."/>
            <person name="Cerdeno-Tarraga A.M."/>
            <person name="Vernikos G.S."/>
            <person name="Giddens S.R."/>
            <person name="Jackson R.W."/>
            <person name="Preston G.M."/>
            <person name="Zhang X.-X."/>
            <person name="Moon C.D."/>
            <person name="Gehrig S.M."/>
            <person name="Godfrey S.A.C."/>
            <person name="Knight C.G."/>
            <person name="Malone J.G."/>
            <person name="Robinson Z."/>
            <person name="Spiers A.J."/>
            <person name="Harris S."/>
            <person name="Challis G.L."/>
            <person name="Yaxley A.M."/>
            <person name="Harris D."/>
            <person name="Seeger K."/>
            <person name="Murphy L."/>
            <person name="Rutter S."/>
            <person name="Squares R."/>
            <person name="Quail M.A."/>
            <person name="Saunders E."/>
            <person name="Mavromatis K."/>
            <person name="Brettin T.S."/>
            <person name="Bentley S.D."/>
            <person name="Hothersall J."/>
            <person name="Stephens E."/>
            <person name="Thomas C.M."/>
            <person name="Parkhill J."/>
            <person name="Levy S.B."/>
            <person name="Rainey P.B."/>
            <person name="Thomson N.R."/>
        </authorList>
    </citation>
    <scope>NUCLEOTIDE SEQUENCE [LARGE SCALE GENOMIC DNA]</scope>
    <source>
        <strain>SBW25</strain>
    </source>
</reference>